<feature type="chain" id="PRO_0000447776" description="Cell division protein FtsZ">
    <location>
        <begin position="1"/>
        <end position="562"/>
    </location>
</feature>
<feature type="region of interest" description="Disordered" evidence="2">
    <location>
        <begin position="404"/>
        <end position="428"/>
    </location>
</feature>
<feature type="region of interest" description="Disordered" evidence="2">
    <location>
        <begin position="462"/>
        <end position="562"/>
    </location>
</feature>
<feature type="compositionally biased region" description="Low complexity" evidence="2">
    <location>
        <begin position="404"/>
        <end position="413"/>
    </location>
</feature>
<feature type="compositionally biased region" description="Basic and acidic residues" evidence="2">
    <location>
        <begin position="418"/>
        <end position="428"/>
    </location>
</feature>
<feature type="compositionally biased region" description="Low complexity" evidence="2">
    <location>
        <begin position="464"/>
        <end position="486"/>
    </location>
</feature>
<feature type="compositionally biased region" description="Low complexity" evidence="2">
    <location>
        <begin position="500"/>
        <end position="510"/>
    </location>
</feature>
<feature type="binding site" evidence="1">
    <location>
        <begin position="23"/>
        <end position="27"/>
    </location>
    <ligand>
        <name>GTP</name>
        <dbReference type="ChEBI" id="CHEBI:37565"/>
    </ligand>
</feature>
<feature type="binding site" evidence="1">
    <location>
        <begin position="110"/>
        <end position="112"/>
    </location>
    <ligand>
        <name>GTP</name>
        <dbReference type="ChEBI" id="CHEBI:37565"/>
    </ligand>
</feature>
<feature type="binding site" evidence="1">
    <location>
        <position position="141"/>
    </location>
    <ligand>
        <name>GTP</name>
        <dbReference type="ChEBI" id="CHEBI:37565"/>
    </ligand>
</feature>
<feature type="binding site" evidence="1">
    <location>
        <position position="145"/>
    </location>
    <ligand>
        <name>GTP</name>
        <dbReference type="ChEBI" id="CHEBI:37565"/>
    </ligand>
</feature>
<feature type="binding site" evidence="1">
    <location>
        <position position="189"/>
    </location>
    <ligand>
        <name>GTP</name>
        <dbReference type="ChEBI" id="CHEBI:37565"/>
    </ligand>
</feature>
<feature type="sequence conflict" description="In Ref. 1; AEO79972." evidence="5" ref="1">
    <original>D</original>
    <variation>G</variation>
    <location>
        <position position="449"/>
    </location>
</feature>
<comment type="function">
    <text evidence="1 3">Essential cell division protein that forms a contractile ring structure (Z ring) at the future cell division site. The regulation of the ring assembly controls the timing and the location of cell division. One of the functions of the FtsZ ring is to recruit other cell division proteins to the septum to produce a new cell wall between the dividing cells. Binds GTP and shows GTPase activity (By similarity). Mild overexpression impairs cell division, leading to very elongated cells. Isolated protein forms filaments and bundles in the presence of GTP (PubMed:24272781).</text>
</comment>
<comment type="subunit">
    <text evidence="1 6">Homodimer. Polymerizes to form a dynamic ring structure in a strictly GTP-dependent manner. Interacts directly with several other division proteins (By similarity). Interacts with FtsZ-like protein (also called FtsZm) (Probable).</text>
</comment>
<comment type="subcellular location">
    <subcellularLocation>
        <location evidence="6">Cytoplasm</location>
    </subcellularLocation>
    <text evidence="3 6">Assembles at midcell at the inner surface of the cytoplasmic membrane (Probable). Upon mild overexpression during extended growth additional foci appear, which are probably blocked division sites. Foci colocalize with FtsZ-like protein (also called FtsZm) (PubMed:24272781).</text>
</comment>
<comment type="disruption phenotype">
    <text evidence="3">Essential; it cannot be disrupted. Although it colocalizes with paralog FtsZ-like, the latter cannot replace it.</text>
</comment>
<comment type="similarity">
    <text evidence="1">Belongs to the FtsZ family.</text>
</comment>
<keyword id="KW-0131">Cell cycle</keyword>
<keyword id="KW-0132">Cell division</keyword>
<keyword id="KW-0963">Cytoplasm</keyword>
<keyword id="KW-0342">GTP-binding</keyword>
<keyword id="KW-0547">Nucleotide-binding</keyword>
<keyword id="KW-1185">Reference proteome</keyword>
<keyword id="KW-0717">Septation</keyword>
<accession>V6F5E5</accession>
<accession>G8GJE0</accession>
<dbReference type="EMBL" id="JN157806">
    <property type="protein sequence ID" value="AEO79972.1"/>
    <property type="molecule type" value="Genomic_DNA"/>
</dbReference>
<dbReference type="EMBL" id="HG794546">
    <property type="protein sequence ID" value="CDK99718.1"/>
    <property type="molecule type" value="Genomic_DNA"/>
</dbReference>
<dbReference type="RefSeq" id="WP_024080680.1">
    <property type="nucleotide sequence ID" value="NZ_CP027526.1"/>
</dbReference>
<dbReference type="SMR" id="V6F5E5"/>
<dbReference type="STRING" id="1430440.MGMSRv2__2503"/>
<dbReference type="KEGG" id="mgry:MSR1_38110"/>
<dbReference type="KEGG" id="mgy:MGMSRv2__2503"/>
<dbReference type="eggNOG" id="COG0206">
    <property type="taxonomic scope" value="Bacteria"/>
</dbReference>
<dbReference type="HOGENOM" id="CLU_024865_5_2_5"/>
<dbReference type="OrthoDB" id="9813375at2"/>
<dbReference type="Proteomes" id="UP000018922">
    <property type="component" value="Chromosome I"/>
</dbReference>
<dbReference type="GO" id="GO:0032153">
    <property type="term" value="C:cell division site"/>
    <property type="evidence" value="ECO:0007669"/>
    <property type="project" value="UniProtKB-UniRule"/>
</dbReference>
<dbReference type="GO" id="GO:0005737">
    <property type="term" value="C:cytoplasm"/>
    <property type="evidence" value="ECO:0000314"/>
    <property type="project" value="UniProtKB"/>
</dbReference>
<dbReference type="GO" id="GO:0005874">
    <property type="term" value="C:microtubule"/>
    <property type="evidence" value="ECO:0007669"/>
    <property type="project" value="InterPro"/>
</dbReference>
<dbReference type="GO" id="GO:0005525">
    <property type="term" value="F:GTP binding"/>
    <property type="evidence" value="ECO:0007669"/>
    <property type="project" value="UniProtKB-UniRule"/>
</dbReference>
<dbReference type="GO" id="GO:0003924">
    <property type="term" value="F:GTPase activity"/>
    <property type="evidence" value="ECO:0007669"/>
    <property type="project" value="UniProtKB-UniRule"/>
</dbReference>
<dbReference type="GO" id="GO:0000917">
    <property type="term" value="P:division septum assembly"/>
    <property type="evidence" value="ECO:0007669"/>
    <property type="project" value="UniProtKB-KW"/>
</dbReference>
<dbReference type="GO" id="GO:0043093">
    <property type="term" value="P:FtsZ-dependent cytokinesis"/>
    <property type="evidence" value="ECO:0007669"/>
    <property type="project" value="UniProtKB-UniRule"/>
</dbReference>
<dbReference type="GO" id="GO:0007017">
    <property type="term" value="P:microtubule-based process"/>
    <property type="evidence" value="ECO:0007669"/>
    <property type="project" value="InterPro"/>
</dbReference>
<dbReference type="GO" id="GO:0051258">
    <property type="term" value="P:protein polymerization"/>
    <property type="evidence" value="ECO:0007669"/>
    <property type="project" value="UniProtKB-UniRule"/>
</dbReference>
<dbReference type="CDD" id="cd02201">
    <property type="entry name" value="FtsZ_type1"/>
    <property type="match status" value="1"/>
</dbReference>
<dbReference type="FunFam" id="3.30.1330.20:FF:000011">
    <property type="entry name" value="Cell division protein FtsZ"/>
    <property type="match status" value="1"/>
</dbReference>
<dbReference type="FunFam" id="3.40.50.1440:FF:000001">
    <property type="entry name" value="Cell division protein FtsZ"/>
    <property type="match status" value="1"/>
</dbReference>
<dbReference type="Gene3D" id="3.30.1330.20">
    <property type="entry name" value="Tubulin/FtsZ, C-terminal domain"/>
    <property type="match status" value="1"/>
</dbReference>
<dbReference type="Gene3D" id="3.40.50.1440">
    <property type="entry name" value="Tubulin/FtsZ, GTPase domain"/>
    <property type="match status" value="1"/>
</dbReference>
<dbReference type="HAMAP" id="MF_00909">
    <property type="entry name" value="FtsZ"/>
    <property type="match status" value="1"/>
</dbReference>
<dbReference type="InterPro" id="IPR000158">
    <property type="entry name" value="Cell_div_FtsZ"/>
</dbReference>
<dbReference type="InterPro" id="IPR020805">
    <property type="entry name" value="Cell_div_FtsZ_CS"/>
</dbReference>
<dbReference type="InterPro" id="IPR045061">
    <property type="entry name" value="FtsZ/CetZ"/>
</dbReference>
<dbReference type="InterPro" id="IPR024757">
    <property type="entry name" value="FtsZ_C"/>
</dbReference>
<dbReference type="InterPro" id="IPR008280">
    <property type="entry name" value="Tub_FtsZ_C"/>
</dbReference>
<dbReference type="InterPro" id="IPR037103">
    <property type="entry name" value="Tubulin/FtsZ-like_C"/>
</dbReference>
<dbReference type="InterPro" id="IPR018316">
    <property type="entry name" value="Tubulin/FtsZ_2-layer-sand-dom"/>
</dbReference>
<dbReference type="InterPro" id="IPR036525">
    <property type="entry name" value="Tubulin/FtsZ_GTPase_sf"/>
</dbReference>
<dbReference type="InterPro" id="IPR017975">
    <property type="entry name" value="Tubulin_CS"/>
</dbReference>
<dbReference type="InterPro" id="IPR003008">
    <property type="entry name" value="Tubulin_FtsZ_GTPase"/>
</dbReference>
<dbReference type="NCBIfam" id="TIGR00065">
    <property type="entry name" value="ftsZ"/>
    <property type="match status" value="1"/>
</dbReference>
<dbReference type="PANTHER" id="PTHR30314">
    <property type="entry name" value="CELL DIVISION PROTEIN FTSZ-RELATED"/>
    <property type="match status" value="1"/>
</dbReference>
<dbReference type="PANTHER" id="PTHR30314:SF3">
    <property type="entry name" value="MITOCHONDRIAL DIVISION PROTEIN FSZA"/>
    <property type="match status" value="1"/>
</dbReference>
<dbReference type="Pfam" id="PF12327">
    <property type="entry name" value="FtsZ_C"/>
    <property type="match status" value="1"/>
</dbReference>
<dbReference type="Pfam" id="PF00091">
    <property type="entry name" value="Tubulin"/>
    <property type="match status" value="1"/>
</dbReference>
<dbReference type="PRINTS" id="PR00423">
    <property type="entry name" value="CELLDVISFTSZ"/>
</dbReference>
<dbReference type="SMART" id="SM00864">
    <property type="entry name" value="Tubulin"/>
    <property type="match status" value="1"/>
</dbReference>
<dbReference type="SMART" id="SM00865">
    <property type="entry name" value="Tubulin_C"/>
    <property type="match status" value="1"/>
</dbReference>
<dbReference type="SUPFAM" id="SSF55307">
    <property type="entry name" value="Tubulin C-terminal domain-like"/>
    <property type="match status" value="1"/>
</dbReference>
<dbReference type="SUPFAM" id="SSF52490">
    <property type="entry name" value="Tubulin nucleotide-binding domain-like"/>
    <property type="match status" value="1"/>
</dbReference>
<dbReference type="PROSITE" id="PS01135">
    <property type="entry name" value="FTSZ_2"/>
    <property type="match status" value="1"/>
</dbReference>
<dbReference type="PROSITE" id="PS00227">
    <property type="entry name" value="TUBULIN"/>
    <property type="match status" value="1"/>
</dbReference>
<organism>
    <name type="scientific">Magnetospirillum gryphiswaldense (strain DSM 6361 / JCM 21280 / NBRC 15271 / MSR-1)</name>
    <dbReference type="NCBI Taxonomy" id="431944"/>
    <lineage>
        <taxon>Bacteria</taxon>
        <taxon>Pseudomonadati</taxon>
        <taxon>Pseudomonadota</taxon>
        <taxon>Alphaproteobacteria</taxon>
        <taxon>Rhodospirillales</taxon>
        <taxon>Rhodospirillaceae</taxon>
        <taxon>Magnetospirillum</taxon>
    </lineage>
</organism>
<sequence length="562" mass="59309">MLNFLPGNPQDLKPKITVIGVGGAGGNAVNNMIASRLEGVEFIVANTDAQAINQSRTERRVQLGTTVAQGLGAGSRPEIGRAAAEESLEEVIGQIAGANMVFITAGMGGGTGSGAAPVIARAARDHGILTVGVVTKPFHFEGAHRMRTAEGAIEELSQYVDTLIIIPNQNLFRVATERTTFADAFKMADDVLYSGVRGVTDLMIMPGLINLDFADIRTVMSEMGKAMMGTGEAEGDKRAIEAAEAAISNPLLDDTSMKGAKGVLINITGGMDMTLFEVDEAANRIRDEVDPEANIIFGSTFDEKLNGKMRVSVVATGIASEAAAQPKPTVVSLNTPQAQPQPRVAAGGTAGAGFRPAVVTAQAAPAAAVAVAQAQPQMEARTVAQPAPQPAHQPVVTAQVRVQPAAARPAQQPMAETFRPDPQLRLDPVLERPVPATTSLQADFRADPDMGHLSQAVSHIAETAQAAPQPQRQPEIQRQQAPQPQRQPEPEARRSGGLFGLLRRPAAAQPAPQPQRHEPAPMAQQPRQEPARMGNMATRSEPSVARAGEDLDIPAFLRRQAN</sequence>
<name>FTSZ_MAGGM</name>
<proteinExistence type="evidence at transcript level"/>
<reference key="1">
    <citation type="journal article" date="2014" name="J. Bacteriol.">
        <title>The FtsZ-like protein FtsZm of Magnetospirillum gryphiswaldense likely interacts with its generic homolog and is required for biomineralization under nitrate deprivation.</title>
        <authorList>
            <person name="Mueller F.D."/>
            <person name="Raschdorf O."/>
            <person name="Nudelman H."/>
            <person name="Messerer M."/>
            <person name="Katzmann E."/>
            <person name="Plitzko J.M."/>
            <person name="Zarivach R."/>
            <person name="Schueler D."/>
        </authorList>
    </citation>
    <scope>NUCLEOTIDE SEQUENCE [GENOMIC DNA]</scope>
    <scope>FUNCTION</scope>
    <scope>SUBCELLULAR LOCATION</scope>
    <scope>INDUCTION</scope>
    <scope>DISRUPTION PHENOTYPE</scope>
    <source>
        <strain>DSM 6361 / JCM 21280 / NBRC 15271 / MSR-1</strain>
    </source>
</reference>
<reference key="2">
    <citation type="journal article" date="2014" name="Genome Announc.">
        <title>Complete genome sequence of Magnetospirillum gryphiswaldense MSR-1.</title>
        <authorList>
            <person name="Wang X."/>
            <person name="Wang Q."/>
            <person name="Zhang W."/>
            <person name="Wang Y."/>
            <person name="Li L."/>
            <person name="Wen T."/>
            <person name="Zhang T."/>
            <person name="Zhang Y."/>
            <person name="Xu J."/>
            <person name="Hu J."/>
            <person name="Li S."/>
            <person name="Liu L."/>
            <person name="Liu J."/>
            <person name="Jiang W."/>
            <person name="Tian J."/>
            <person name="Li Y."/>
            <person name="Schuler D."/>
            <person name="Wang L."/>
            <person name="Li J."/>
        </authorList>
    </citation>
    <scope>NUCLEOTIDE SEQUENCE [LARGE SCALE GENOMIC DNA]</scope>
    <source>
        <strain>DSM 6361 / JCM 21280 / NBRC 15271 / MSR-1</strain>
    </source>
</reference>
<evidence type="ECO:0000255" key="1">
    <source>
        <dbReference type="HAMAP-Rule" id="MF_00909"/>
    </source>
</evidence>
<evidence type="ECO:0000256" key="2">
    <source>
        <dbReference type="SAM" id="MobiDB-lite"/>
    </source>
</evidence>
<evidence type="ECO:0000269" key="3">
    <source>
    </source>
</evidence>
<evidence type="ECO:0000303" key="4">
    <source>
    </source>
</evidence>
<evidence type="ECO:0000305" key="5"/>
<evidence type="ECO:0000305" key="6">
    <source>
    </source>
</evidence>
<protein>
    <recommendedName>
        <fullName evidence="1">Cell division protein FtsZ</fullName>
    </recommendedName>
</protein>
<gene>
    <name evidence="1 4" type="primary">ftsZ</name>
    <name type="ordered locus">MGMSRv2__2503</name>
</gene>